<keyword id="KW-0378">Hydrolase</keyword>
<keyword id="KW-0479">Metal-binding</keyword>
<keyword id="KW-0665">Pyrimidine biosynthesis</keyword>
<keyword id="KW-1185">Reference proteome</keyword>
<keyword id="KW-0862">Zinc</keyword>
<evidence type="ECO:0000255" key="1">
    <source>
        <dbReference type="HAMAP-Rule" id="MF_00220"/>
    </source>
</evidence>
<reference key="1">
    <citation type="journal article" date="2005" name="Nat. Biotechnol.">
        <title>The complete genome sequence of the meat-borne lactic acid bacterium Lactobacillus sakei 23K.</title>
        <authorList>
            <person name="Chaillou S."/>
            <person name="Champomier-Verges M.-C."/>
            <person name="Cornet M."/>
            <person name="Crutz-Le Coq A.-M."/>
            <person name="Dudez A.-M."/>
            <person name="Martin V."/>
            <person name="Beaufils S."/>
            <person name="Darbon-Rongere E."/>
            <person name="Bossy R."/>
            <person name="Loux V."/>
            <person name="Zagorec M."/>
        </authorList>
    </citation>
    <scope>NUCLEOTIDE SEQUENCE [LARGE SCALE GENOMIC DNA]</scope>
    <source>
        <strain>23K</strain>
    </source>
</reference>
<feature type="chain" id="PRO_1000024092" description="Dihydroorotase">
    <location>
        <begin position="1"/>
        <end position="429"/>
    </location>
</feature>
<feature type="active site" evidence="1">
    <location>
        <position position="307"/>
    </location>
</feature>
<feature type="binding site" evidence="1">
    <location>
        <position position="62"/>
    </location>
    <ligand>
        <name>Zn(2+)</name>
        <dbReference type="ChEBI" id="CHEBI:29105"/>
        <label>1</label>
    </ligand>
</feature>
<feature type="binding site" evidence="1">
    <location>
        <begin position="64"/>
        <end position="66"/>
    </location>
    <ligand>
        <name>substrate</name>
    </ligand>
</feature>
<feature type="binding site" evidence="1">
    <location>
        <position position="64"/>
    </location>
    <ligand>
        <name>Zn(2+)</name>
        <dbReference type="ChEBI" id="CHEBI:29105"/>
        <label>1</label>
    </ligand>
</feature>
<feature type="binding site" evidence="1">
    <location>
        <position position="96"/>
    </location>
    <ligand>
        <name>substrate</name>
    </ligand>
</feature>
<feature type="binding site" evidence="1">
    <location>
        <position position="154"/>
    </location>
    <ligand>
        <name>Zn(2+)</name>
        <dbReference type="ChEBI" id="CHEBI:29105"/>
        <label>1</label>
    </ligand>
</feature>
<feature type="binding site" evidence="1">
    <location>
        <position position="154"/>
    </location>
    <ligand>
        <name>Zn(2+)</name>
        <dbReference type="ChEBI" id="CHEBI:29105"/>
        <label>2</label>
    </ligand>
</feature>
<feature type="binding site" evidence="1">
    <location>
        <position position="181"/>
    </location>
    <ligand>
        <name>Zn(2+)</name>
        <dbReference type="ChEBI" id="CHEBI:29105"/>
        <label>2</label>
    </ligand>
</feature>
<feature type="binding site" evidence="1">
    <location>
        <position position="234"/>
    </location>
    <ligand>
        <name>Zn(2+)</name>
        <dbReference type="ChEBI" id="CHEBI:29105"/>
        <label>2</label>
    </ligand>
</feature>
<feature type="binding site" evidence="1">
    <location>
        <position position="280"/>
    </location>
    <ligand>
        <name>substrate</name>
    </ligand>
</feature>
<feature type="binding site" evidence="1">
    <location>
        <position position="307"/>
    </location>
    <ligand>
        <name>Zn(2+)</name>
        <dbReference type="ChEBI" id="CHEBI:29105"/>
        <label>1</label>
    </ligand>
</feature>
<feature type="binding site" evidence="1">
    <location>
        <position position="311"/>
    </location>
    <ligand>
        <name>substrate</name>
    </ligand>
</feature>
<feature type="binding site" evidence="1">
    <location>
        <begin position="325"/>
        <end position="326"/>
    </location>
    <ligand>
        <name>substrate</name>
    </ligand>
</feature>
<organism>
    <name type="scientific">Latilactobacillus sakei subsp. sakei (strain 23K)</name>
    <name type="common">Lactobacillus sakei subsp. sakei</name>
    <dbReference type="NCBI Taxonomy" id="314315"/>
    <lineage>
        <taxon>Bacteria</taxon>
        <taxon>Bacillati</taxon>
        <taxon>Bacillota</taxon>
        <taxon>Bacilli</taxon>
        <taxon>Lactobacillales</taxon>
        <taxon>Lactobacillaceae</taxon>
        <taxon>Latilactobacillus</taxon>
    </lineage>
</organism>
<proteinExistence type="inferred from homology"/>
<gene>
    <name evidence="1" type="primary">pyrC</name>
    <name type="ordered locus">LCA_0953</name>
</gene>
<comment type="function">
    <text evidence="1">Catalyzes the reversible cyclization of carbamoyl aspartate to dihydroorotate.</text>
</comment>
<comment type="catalytic activity">
    <reaction evidence="1">
        <text>(S)-dihydroorotate + H2O = N-carbamoyl-L-aspartate + H(+)</text>
        <dbReference type="Rhea" id="RHEA:24296"/>
        <dbReference type="ChEBI" id="CHEBI:15377"/>
        <dbReference type="ChEBI" id="CHEBI:15378"/>
        <dbReference type="ChEBI" id="CHEBI:30864"/>
        <dbReference type="ChEBI" id="CHEBI:32814"/>
        <dbReference type="EC" id="3.5.2.3"/>
    </reaction>
</comment>
<comment type="cofactor">
    <cofactor evidence="1">
        <name>Zn(2+)</name>
        <dbReference type="ChEBI" id="CHEBI:29105"/>
    </cofactor>
    <text evidence="1">Binds 2 Zn(2+) ions per subunit.</text>
</comment>
<comment type="pathway">
    <text evidence="1">Pyrimidine metabolism; UMP biosynthesis via de novo pathway; (S)-dihydroorotate from bicarbonate: step 3/3.</text>
</comment>
<comment type="similarity">
    <text evidence="1">Belongs to the metallo-dependent hydrolases superfamily. DHOase family. Class I DHOase subfamily.</text>
</comment>
<name>PYRC_LATSS</name>
<sequence>MYRLIQNGQLLIDDQLVKRDIAIDEKGRITAIEAQITPTDEPTETIFDAQGALVSAGLIDGHVHFRDPGFTDKETLQTGSQAAAHGGYTSVIAMPNLNPVPDNLSDFKTLVARNQTETSVHTYQFAPITGDLVNNDLVDMPAFKAAGAAGFTNDGHGVQDAQTMYLAMQQAAAIDAPIVAHVEDISLVNGGVIHDGAAAKRLNVPGIPSVSESAQVARDIELARATGVHYHICHISTKETVALVRRAKADGVNITCEVTPHHLLLDDRSIISDDTMLKMNPPLRTLADRQSLWAGLMDGTIDVIATDHAPHTAAEKSQSLLQAPFGIVGSETAFSLLYTHLVVNGPFSLAQLLAKMTTVPAQVFNLPAAGQLRVGDQADIAVFNLTQPTTIQATDFQSKGHNTPFIGETVLGGTELTLVAGQVAYQRSK</sequence>
<dbReference type="EC" id="3.5.2.3" evidence="1"/>
<dbReference type="EMBL" id="CR936503">
    <property type="protein sequence ID" value="CAI55255.1"/>
    <property type="molecule type" value="Genomic_DNA"/>
</dbReference>
<dbReference type="RefSeq" id="WP_011374655.1">
    <property type="nucleotide sequence ID" value="NC_007576.1"/>
</dbReference>
<dbReference type="SMR" id="Q38X26"/>
<dbReference type="STRING" id="314315.LCA_0953"/>
<dbReference type="KEGG" id="lsa:LCA_0953"/>
<dbReference type="eggNOG" id="COG0044">
    <property type="taxonomic scope" value="Bacteria"/>
</dbReference>
<dbReference type="HOGENOM" id="CLU_015572_1_0_9"/>
<dbReference type="OrthoDB" id="9765462at2"/>
<dbReference type="UniPathway" id="UPA00070">
    <property type="reaction ID" value="UER00117"/>
</dbReference>
<dbReference type="Proteomes" id="UP000002707">
    <property type="component" value="Chromosome"/>
</dbReference>
<dbReference type="GO" id="GO:0005737">
    <property type="term" value="C:cytoplasm"/>
    <property type="evidence" value="ECO:0007669"/>
    <property type="project" value="TreeGrafter"/>
</dbReference>
<dbReference type="GO" id="GO:0004038">
    <property type="term" value="F:allantoinase activity"/>
    <property type="evidence" value="ECO:0007669"/>
    <property type="project" value="TreeGrafter"/>
</dbReference>
<dbReference type="GO" id="GO:0004151">
    <property type="term" value="F:dihydroorotase activity"/>
    <property type="evidence" value="ECO:0007669"/>
    <property type="project" value="UniProtKB-UniRule"/>
</dbReference>
<dbReference type="GO" id="GO:0008270">
    <property type="term" value="F:zinc ion binding"/>
    <property type="evidence" value="ECO:0007669"/>
    <property type="project" value="UniProtKB-UniRule"/>
</dbReference>
<dbReference type="GO" id="GO:0044205">
    <property type="term" value="P:'de novo' UMP biosynthetic process"/>
    <property type="evidence" value="ECO:0007669"/>
    <property type="project" value="UniProtKB-UniRule"/>
</dbReference>
<dbReference type="GO" id="GO:0006145">
    <property type="term" value="P:purine nucleobase catabolic process"/>
    <property type="evidence" value="ECO:0007669"/>
    <property type="project" value="TreeGrafter"/>
</dbReference>
<dbReference type="CDD" id="cd01317">
    <property type="entry name" value="DHOase_IIa"/>
    <property type="match status" value="1"/>
</dbReference>
<dbReference type="Gene3D" id="3.20.20.140">
    <property type="entry name" value="Metal-dependent hydrolases"/>
    <property type="match status" value="1"/>
</dbReference>
<dbReference type="Gene3D" id="2.30.40.10">
    <property type="entry name" value="Urease, subunit C, domain 1"/>
    <property type="match status" value="1"/>
</dbReference>
<dbReference type="HAMAP" id="MF_00220_B">
    <property type="entry name" value="PyrC_classI_B"/>
    <property type="match status" value="1"/>
</dbReference>
<dbReference type="InterPro" id="IPR006680">
    <property type="entry name" value="Amidohydro-rel"/>
</dbReference>
<dbReference type="InterPro" id="IPR004722">
    <property type="entry name" value="DHOase"/>
</dbReference>
<dbReference type="InterPro" id="IPR050138">
    <property type="entry name" value="DHOase/Allantoinase_Hydrolase"/>
</dbReference>
<dbReference type="InterPro" id="IPR002195">
    <property type="entry name" value="Dihydroorotase_CS"/>
</dbReference>
<dbReference type="InterPro" id="IPR011059">
    <property type="entry name" value="Metal-dep_hydrolase_composite"/>
</dbReference>
<dbReference type="InterPro" id="IPR032466">
    <property type="entry name" value="Metal_Hydrolase"/>
</dbReference>
<dbReference type="NCBIfam" id="NF006837">
    <property type="entry name" value="PRK09357.1-2"/>
    <property type="match status" value="1"/>
</dbReference>
<dbReference type="NCBIfam" id="TIGR00857">
    <property type="entry name" value="pyrC_multi"/>
    <property type="match status" value="1"/>
</dbReference>
<dbReference type="PANTHER" id="PTHR43668">
    <property type="entry name" value="ALLANTOINASE"/>
    <property type="match status" value="1"/>
</dbReference>
<dbReference type="PANTHER" id="PTHR43668:SF2">
    <property type="entry name" value="ALLANTOINASE"/>
    <property type="match status" value="1"/>
</dbReference>
<dbReference type="Pfam" id="PF01979">
    <property type="entry name" value="Amidohydro_1"/>
    <property type="match status" value="1"/>
</dbReference>
<dbReference type="SUPFAM" id="SSF51338">
    <property type="entry name" value="Composite domain of metallo-dependent hydrolases"/>
    <property type="match status" value="1"/>
</dbReference>
<dbReference type="SUPFAM" id="SSF51556">
    <property type="entry name" value="Metallo-dependent hydrolases"/>
    <property type="match status" value="1"/>
</dbReference>
<dbReference type="PROSITE" id="PS00483">
    <property type="entry name" value="DIHYDROOROTASE_2"/>
    <property type="match status" value="1"/>
</dbReference>
<protein>
    <recommendedName>
        <fullName evidence="1">Dihydroorotase</fullName>
        <shortName evidence="1">DHOase</shortName>
        <ecNumber evidence="1">3.5.2.3</ecNumber>
    </recommendedName>
</protein>
<accession>Q38X26</accession>